<comment type="subcellular location">
    <subcellularLocation>
        <location evidence="1">Cell inner membrane</location>
        <topology evidence="1">Multi-pass membrane protein</topology>
    </subcellularLocation>
</comment>
<dbReference type="EMBL" id="AE005674">
    <property type="protein sequence ID" value="AAN42445.2"/>
    <property type="molecule type" value="Genomic_DNA"/>
</dbReference>
<dbReference type="EMBL" id="AE014073">
    <property type="protein sequence ID" value="AAP16317.1"/>
    <property type="molecule type" value="Genomic_DNA"/>
</dbReference>
<dbReference type="RefSeq" id="NP_706738.2">
    <property type="nucleotide sequence ID" value="NC_004337.2"/>
</dbReference>
<dbReference type="RefSeq" id="WP_000389260.1">
    <property type="nucleotide sequence ID" value="NZ_WPGW01000056.1"/>
</dbReference>
<dbReference type="STRING" id="198214.SF0812"/>
<dbReference type="PaxDb" id="198214-SF0812"/>
<dbReference type="GeneID" id="1026878"/>
<dbReference type="KEGG" id="sfl:SF0812"/>
<dbReference type="KEGG" id="sfx:S0854"/>
<dbReference type="PATRIC" id="fig|198214.7.peg.940"/>
<dbReference type="HOGENOM" id="CLU_142271_0_0_6"/>
<dbReference type="Proteomes" id="UP000001006">
    <property type="component" value="Chromosome"/>
</dbReference>
<dbReference type="Proteomes" id="UP000002673">
    <property type="component" value="Chromosome"/>
</dbReference>
<dbReference type="GO" id="GO:0005886">
    <property type="term" value="C:plasma membrane"/>
    <property type="evidence" value="ECO:0007669"/>
    <property type="project" value="UniProtKB-SubCell"/>
</dbReference>
<dbReference type="InterPro" id="IPR019703">
    <property type="entry name" value="YbjO_DH-like"/>
</dbReference>
<dbReference type="Pfam" id="PF10767">
    <property type="entry name" value="YbjO_DH-like"/>
    <property type="match status" value="1"/>
</dbReference>
<organism>
    <name type="scientific">Shigella flexneri</name>
    <dbReference type="NCBI Taxonomy" id="623"/>
    <lineage>
        <taxon>Bacteria</taxon>
        <taxon>Pseudomonadati</taxon>
        <taxon>Pseudomonadota</taxon>
        <taxon>Gammaproteobacteria</taxon>
        <taxon>Enterobacterales</taxon>
        <taxon>Enterobacteriaceae</taxon>
        <taxon>Shigella</taxon>
    </lineage>
</organism>
<accession>P0AAZ3</accession>
<accession>P75816</accession>
<sequence>MEDETLGFFKKTSSSHARLNVPALVQVAALAIIMIRGLDVLMIFNTLGVRGIGEFIHRSVQTWSLTLVFLSSLVLVFIEIWCAFSLVKGRRWARWLYLLTQITAASYLWAASLGYGYPELFSIPGESKREIFHSLMLQKLPDMLILMLLFVPSTSRRFFQLQ</sequence>
<reference key="1">
    <citation type="journal article" date="2002" name="Nucleic Acids Res.">
        <title>Genome sequence of Shigella flexneri 2a: insights into pathogenicity through comparison with genomes of Escherichia coli K12 and O157.</title>
        <authorList>
            <person name="Jin Q."/>
            <person name="Yuan Z."/>
            <person name="Xu J."/>
            <person name="Wang Y."/>
            <person name="Shen Y."/>
            <person name="Lu W."/>
            <person name="Wang J."/>
            <person name="Liu H."/>
            <person name="Yang J."/>
            <person name="Yang F."/>
            <person name="Zhang X."/>
            <person name="Zhang J."/>
            <person name="Yang G."/>
            <person name="Wu H."/>
            <person name="Qu D."/>
            <person name="Dong J."/>
            <person name="Sun L."/>
            <person name="Xue Y."/>
            <person name="Zhao A."/>
            <person name="Gao Y."/>
            <person name="Zhu J."/>
            <person name="Kan B."/>
            <person name="Ding K."/>
            <person name="Chen S."/>
            <person name="Cheng H."/>
            <person name="Yao Z."/>
            <person name="He B."/>
            <person name="Chen R."/>
            <person name="Ma D."/>
            <person name="Qiang B."/>
            <person name="Wen Y."/>
            <person name="Hou Y."/>
            <person name="Yu J."/>
        </authorList>
    </citation>
    <scope>NUCLEOTIDE SEQUENCE [LARGE SCALE GENOMIC DNA]</scope>
    <source>
        <strain>301 / Serotype 2a</strain>
    </source>
</reference>
<reference key="2">
    <citation type="journal article" date="2003" name="Infect. Immun.">
        <title>Complete genome sequence and comparative genomics of Shigella flexneri serotype 2a strain 2457T.</title>
        <authorList>
            <person name="Wei J."/>
            <person name="Goldberg M.B."/>
            <person name="Burland V."/>
            <person name="Venkatesan M.M."/>
            <person name="Deng W."/>
            <person name="Fournier G."/>
            <person name="Mayhew G.F."/>
            <person name="Plunkett G. III"/>
            <person name="Rose D.J."/>
            <person name="Darling A."/>
            <person name="Mau B."/>
            <person name="Perna N.T."/>
            <person name="Payne S.M."/>
            <person name="Runyen-Janecky L.J."/>
            <person name="Zhou S."/>
            <person name="Schwartz D.C."/>
            <person name="Blattner F.R."/>
        </authorList>
    </citation>
    <scope>NUCLEOTIDE SEQUENCE [LARGE SCALE GENOMIC DNA]</scope>
    <source>
        <strain>ATCC 700930 / 2457T / Serotype 2a</strain>
    </source>
</reference>
<name>YBJO_SHIFL</name>
<keyword id="KW-0997">Cell inner membrane</keyword>
<keyword id="KW-1003">Cell membrane</keyword>
<keyword id="KW-0472">Membrane</keyword>
<keyword id="KW-1185">Reference proteome</keyword>
<keyword id="KW-0812">Transmembrane</keyword>
<keyword id="KW-1133">Transmembrane helix</keyword>
<feature type="chain" id="PRO_0000168750" description="Inner membrane protein YbjO">
    <location>
        <begin position="1"/>
        <end position="162"/>
    </location>
</feature>
<feature type="topological domain" description="Periplasmic" evidence="2">
    <location>
        <begin position="1"/>
        <end position="23"/>
    </location>
</feature>
<feature type="transmembrane region" description="Helical" evidence="2">
    <location>
        <begin position="24"/>
        <end position="44"/>
    </location>
</feature>
<feature type="topological domain" description="Cytoplasmic" evidence="2">
    <location>
        <begin position="45"/>
        <end position="66"/>
    </location>
</feature>
<feature type="transmembrane region" description="Helical" evidence="2">
    <location>
        <begin position="67"/>
        <end position="87"/>
    </location>
</feature>
<feature type="topological domain" description="Periplasmic" evidence="2">
    <location>
        <begin position="88"/>
        <end position="94"/>
    </location>
</feature>
<feature type="transmembrane region" description="Helical" evidence="2">
    <location>
        <begin position="95"/>
        <end position="115"/>
    </location>
</feature>
<feature type="topological domain" description="Cytoplasmic" evidence="2">
    <location>
        <begin position="116"/>
        <end position="162"/>
    </location>
</feature>
<gene>
    <name type="primary">ybjO</name>
    <name type="ordered locus">SF0812</name>
    <name type="ordered locus">S0854</name>
</gene>
<protein>
    <recommendedName>
        <fullName>Inner membrane protein YbjO</fullName>
    </recommendedName>
</protein>
<evidence type="ECO:0000250" key="1"/>
<evidence type="ECO:0000255" key="2"/>
<proteinExistence type="inferred from homology"/>